<protein>
    <recommendedName>
        <fullName evidence="1">Large ribosomal subunit protein uL24</fullName>
    </recommendedName>
    <alternativeName>
        <fullName evidence="2">50S ribosomal protein L24</fullName>
    </alternativeName>
</protein>
<proteinExistence type="inferred from homology"/>
<gene>
    <name evidence="1" type="primary">rplX</name>
    <name evidence="1" type="synonym">rpl24</name>
    <name type="ordered locus">P9301_17381</name>
</gene>
<keyword id="KW-1185">Reference proteome</keyword>
<keyword id="KW-0687">Ribonucleoprotein</keyword>
<keyword id="KW-0689">Ribosomal protein</keyword>
<keyword id="KW-0694">RNA-binding</keyword>
<keyword id="KW-0699">rRNA-binding</keyword>
<organism>
    <name type="scientific">Prochlorococcus marinus (strain MIT 9301)</name>
    <dbReference type="NCBI Taxonomy" id="167546"/>
    <lineage>
        <taxon>Bacteria</taxon>
        <taxon>Bacillati</taxon>
        <taxon>Cyanobacteriota</taxon>
        <taxon>Cyanophyceae</taxon>
        <taxon>Synechococcales</taxon>
        <taxon>Prochlorococcaceae</taxon>
        <taxon>Prochlorococcus</taxon>
    </lineage>
</organism>
<reference key="1">
    <citation type="journal article" date="2007" name="PLoS Genet.">
        <title>Patterns and implications of gene gain and loss in the evolution of Prochlorococcus.</title>
        <authorList>
            <person name="Kettler G.C."/>
            <person name="Martiny A.C."/>
            <person name="Huang K."/>
            <person name="Zucker J."/>
            <person name="Coleman M.L."/>
            <person name="Rodrigue S."/>
            <person name="Chen F."/>
            <person name="Lapidus A."/>
            <person name="Ferriera S."/>
            <person name="Johnson J."/>
            <person name="Steglich C."/>
            <person name="Church G.M."/>
            <person name="Richardson P."/>
            <person name="Chisholm S.W."/>
        </authorList>
    </citation>
    <scope>NUCLEOTIDE SEQUENCE [LARGE SCALE GENOMIC DNA]</scope>
    <source>
        <strain>MIT 9301</strain>
    </source>
</reference>
<comment type="function">
    <text evidence="1">One of two assembly initiator proteins, it binds directly to the 5'-end of the 23S rRNA, where it nucleates assembly of the 50S subunit.</text>
</comment>
<comment type="function">
    <text evidence="1">One of the proteins that surrounds the polypeptide exit tunnel on the outside of the subunit.</text>
</comment>
<comment type="subunit">
    <text evidence="1">Part of the 50S ribosomal subunit.</text>
</comment>
<comment type="similarity">
    <text evidence="1">Belongs to the universal ribosomal protein uL24 family.</text>
</comment>
<name>RL24_PROM0</name>
<feature type="chain" id="PRO_0000355708" description="Large ribosomal subunit protein uL24">
    <location>
        <begin position="1"/>
        <end position="118"/>
    </location>
</feature>
<accession>A3PF36</accession>
<sequence>MLDSLKQKKNFQRIKMRIKTGDLVKVINGKEKGKTGEVLKTIPLENRVVVKGINLRTKHVKPTQEGETGRILTEEASLHASNVMFFSKEKNLTSKIEYFIDKEGVKKRRLKKTGEVID</sequence>
<dbReference type="EMBL" id="CP000576">
    <property type="protein sequence ID" value="ABO18361.1"/>
    <property type="molecule type" value="Genomic_DNA"/>
</dbReference>
<dbReference type="RefSeq" id="WP_011863653.1">
    <property type="nucleotide sequence ID" value="NC_009091.1"/>
</dbReference>
<dbReference type="SMR" id="A3PF36"/>
<dbReference type="STRING" id="167546.P9301_17381"/>
<dbReference type="KEGG" id="pmg:P9301_17381"/>
<dbReference type="eggNOG" id="COG0198">
    <property type="taxonomic scope" value="Bacteria"/>
</dbReference>
<dbReference type="HOGENOM" id="CLU_093315_2_0_3"/>
<dbReference type="OrthoDB" id="9807419at2"/>
<dbReference type="Proteomes" id="UP000001430">
    <property type="component" value="Chromosome"/>
</dbReference>
<dbReference type="GO" id="GO:1990904">
    <property type="term" value="C:ribonucleoprotein complex"/>
    <property type="evidence" value="ECO:0007669"/>
    <property type="project" value="UniProtKB-KW"/>
</dbReference>
<dbReference type="GO" id="GO:0005840">
    <property type="term" value="C:ribosome"/>
    <property type="evidence" value="ECO:0007669"/>
    <property type="project" value="UniProtKB-KW"/>
</dbReference>
<dbReference type="GO" id="GO:0019843">
    <property type="term" value="F:rRNA binding"/>
    <property type="evidence" value="ECO:0007669"/>
    <property type="project" value="UniProtKB-UniRule"/>
</dbReference>
<dbReference type="GO" id="GO:0003735">
    <property type="term" value="F:structural constituent of ribosome"/>
    <property type="evidence" value="ECO:0007669"/>
    <property type="project" value="InterPro"/>
</dbReference>
<dbReference type="GO" id="GO:0006412">
    <property type="term" value="P:translation"/>
    <property type="evidence" value="ECO:0007669"/>
    <property type="project" value="UniProtKB-UniRule"/>
</dbReference>
<dbReference type="CDD" id="cd06089">
    <property type="entry name" value="KOW_RPL26"/>
    <property type="match status" value="1"/>
</dbReference>
<dbReference type="Gene3D" id="2.30.30.30">
    <property type="match status" value="1"/>
</dbReference>
<dbReference type="HAMAP" id="MF_01326_B">
    <property type="entry name" value="Ribosomal_uL24_B"/>
    <property type="match status" value="1"/>
</dbReference>
<dbReference type="InterPro" id="IPR005824">
    <property type="entry name" value="KOW"/>
</dbReference>
<dbReference type="InterPro" id="IPR014722">
    <property type="entry name" value="Rib_uL2_dom2"/>
</dbReference>
<dbReference type="InterPro" id="IPR003256">
    <property type="entry name" value="Ribosomal_uL24"/>
</dbReference>
<dbReference type="InterPro" id="IPR005825">
    <property type="entry name" value="Ribosomal_uL24_CS"/>
</dbReference>
<dbReference type="InterPro" id="IPR041988">
    <property type="entry name" value="Ribosomal_uL24_KOW"/>
</dbReference>
<dbReference type="InterPro" id="IPR008991">
    <property type="entry name" value="Translation_prot_SH3-like_sf"/>
</dbReference>
<dbReference type="NCBIfam" id="TIGR01079">
    <property type="entry name" value="rplX_bact"/>
    <property type="match status" value="1"/>
</dbReference>
<dbReference type="PANTHER" id="PTHR12903">
    <property type="entry name" value="MITOCHONDRIAL RIBOSOMAL PROTEIN L24"/>
    <property type="match status" value="1"/>
</dbReference>
<dbReference type="Pfam" id="PF00467">
    <property type="entry name" value="KOW"/>
    <property type="match status" value="1"/>
</dbReference>
<dbReference type="Pfam" id="PF17136">
    <property type="entry name" value="ribosomal_L24"/>
    <property type="match status" value="1"/>
</dbReference>
<dbReference type="SMART" id="SM00739">
    <property type="entry name" value="KOW"/>
    <property type="match status" value="1"/>
</dbReference>
<dbReference type="SUPFAM" id="SSF50104">
    <property type="entry name" value="Translation proteins SH3-like domain"/>
    <property type="match status" value="1"/>
</dbReference>
<dbReference type="PROSITE" id="PS01108">
    <property type="entry name" value="RIBOSOMAL_L24"/>
    <property type="match status" value="1"/>
</dbReference>
<evidence type="ECO:0000255" key="1">
    <source>
        <dbReference type="HAMAP-Rule" id="MF_01326"/>
    </source>
</evidence>
<evidence type="ECO:0000305" key="2"/>